<keyword id="KW-1185">Reference proteome</keyword>
<keyword id="KW-0687">Ribonucleoprotein</keyword>
<keyword id="KW-0689">Ribosomal protein</keyword>
<keyword id="KW-0694">RNA-binding</keyword>
<keyword id="KW-0699">rRNA-binding</keyword>
<feature type="chain" id="PRO_0000270732" description="Large ribosomal subunit protein bL21">
    <location>
        <begin position="1"/>
        <end position="216"/>
    </location>
</feature>
<protein>
    <recommendedName>
        <fullName evidence="1">Large ribosomal subunit protein bL21</fullName>
    </recommendedName>
    <alternativeName>
        <fullName evidence="2">50S ribosomal protein L21</fullName>
    </alternativeName>
</protein>
<proteinExistence type="inferred from homology"/>
<gene>
    <name evidence="1" type="primary">rplU</name>
    <name type="ordered locus">RD1_2665</name>
</gene>
<comment type="function">
    <text evidence="1">This protein binds to 23S rRNA in the presence of protein L20.</text>
</comment>
<comment type="subunit">
    <text evidence="1">Part of the 50S ribosomal subunit. Contacts protein L20.</text>
</comment>
<comment type="similarity">
    <text evidence="1">Belongs to the bacterial ribosomal protein bL21 family.</text>
</comment>
<comment type="sequence caution" evidence="2">
    <conflict type="erroneous initiation">
        <sequence resource="EMBL-CDS" id="ABG32211"/>
    </conflict>
</comment>
<sequence>MFAVLKTGGKQYKVQAGDMLRVEKLAADAGETVQFNEVLMLGGENTVVGAPFVKDAGVQAEVVDQIKGEKVINFVKRRRKHSSKRTKGHRQKLTLVKVTDILASGADKSGVKAAMGAGSVSATAVAAAAPKPTKKAAPAKAEKAEAAPAAGADDLKKLSGVGPALEKKLIEGGVTSFAQIAAWTEADVAAMDEKLSFKGRIEREGWIEQAKELAKG</sequence>
<evidence type="ECO:0000255" key="1">
    <source>
        <dbReference type="HAMAP-Rule" id="MF_01363"/>
    </source>
</evidence>
<evidence type="ECO:0000305" key="2"/>
<dbReference type="EMBL" id="CP000362">
    <property type="protein sequence ID" value="ABG32211.1"/>
    <property type="status" value="ALT_INIT"/>
    <property type="molecule type" value="Genomic_DNA"/>
</dbReference>
<dbReference type="RefSeq" id="WP_044033127.1">
    <property type="nucleotide sequence ID" value="NC_008209.1"/>
</dbReference>
<dbReference type="SMR" id="Q165Y2"/>
<dbReference type="STRING" id="375451.RD1_2665"/>
<dbReference type="KEGG" id="rde:RD1_2665"/>
<dbReference type="eggNOG" id="COG0261">
    <property type="taxonomic scope" value="Bacteria"/>
</dbReference>
<dbReference type="eggNOG" id="COG3743">
    <property type="taxonomic scope" value="Bacteria"/>
</dbReference>
<dbReference type="HOGENOM" id="CLU_061463_1_0_5"/>
<dbReference type="OrthoDB" id="9813334at2"/>
<dbReference type="Proteomes" id="UP000007029">
    <property type="component" value="Chromosome"/>
</dbReference>
<dbReference type="GO" id="GO:0005737">
    <property type="term" value="C:cytoplasm"/>
    <property type="evidence" value="ECO:0007669"/>
    <property type="project" value="UniProtKB-ARBA"/>
</dbReference>
<dbReference type="GO" id="GO:1990904">
    <property type="term" value="C:ribonucleoprotein complex"/>
    <property type="evidence" value="ECO:0007669"/>
    <property type="project" value="UniProtKB-KW"/>
</dbReference>
<dbReference type="GO" id="GO:0005840">
    <property type="term" value="C:ribosome"/>
    <property type="evidence" value="ECO:0007669"/>
    <property type="project" value="UniProtKB-KW"/>
</dbReference>
<dbReference type="GO" id="GO:0019843">
    <property type="term" value="F:rRNA binding"/>
    <property type="evidence" value="ECO:0007669"/>
    <property type="project" value="UniProtKB-UniRule"/>
</dbReference>
<dbReference type="GO" id="GO:0003735">
    <property type="term" value="F:structural constituent of ribosome"/>
    <property type="evidence" value="ECO:0007669"/>
    <property type="project" value="InterPro"/>
</dbReference>
<dbReference type="GO" id="GO:0006412">
    <property type="term" value="P:translation"/>
    <property type="evidence" value="ECO:0007669"/>
    <property type="project" value="UniProtKB-UniRule"/>
</dbReference>
<dbReference type="Gene3D" id="1.10.150.20">
    <property type="entry name" value="5' to 3' exonuclease, C-terminal subdomain"/>
    <property type="match status" value="1"/>
</dbReference>
<dbReference type="HAMAP" id="MF_01363">
    <property type="entry name" value="Ribosomal_bL21"/>
    <property type="match status" value="1"/>
</dbReference>
<dbReference type="InterPro" id="IPR028909">
    <property type="entry name" value="bL21-like"/>
</dbReference>
<dbReference type="InterPro" id="IPR036164">
    <property type="entry name" value="bL21-like_sf"/>
</dbReference>
<dbReference type="InterPro" id="IPR001787">
    <property type="entry name" value="Ribosomal_bL21"/>
</dbReference>
<dbReference type="NCBIfam" id="TIGR00061">
    <property type="entry name" value="L21"/>
    <property type="match status" value="1"/>
</dbReference>
<dbReference type="NCBIfam" id="NF008915">
    <property type="entry name" value="PRK12278.1-1"/>
    <property type="match status" value="1"/>
</dbReference>
<dbReference type="NCBIfam" id="NF008916">
    <property type="entry name" value="PRK12278.1-4"/>
    <property type="match status" value="1"/>
</dbReference>
<dbReference type="PANTHER" id="PTHR21349">
    <property type="entry name" value="50S RIBOSOMAL PROTEIN L21"/>
    <property type="match status" value="1"/>
</dbReference>
<dbReference type="PANTHER" id="PTHR21349:SF0">
    <property type="entry name" value="LARGE RIBOSOMAL SUBUNIT PROTEIN BL21M"/>
    <property type="match status" value="1"/>
</dbReference>
<dbReference type="Pfam" id="PF14520">
    <property type="entry name" value="HHH_5"/>
    <property type="match status" value="1"/>
</dbReference>
<dbReference type="Pfam" id="PF00829">
    <property type="entry name" value="Ribosomal_L21p"/>
    <property type="match status" value="1"/>
</dbReference>
<dbReference type="SUPFAM" id="SSF141091">
    <property type="entry name" value="L21p-like"/>
    <property type="match status" value="1"/>
</dbReference>
<reference key="1">
    <citation type="journal article" date="2007" name="J. Bacteriol.">
        <title>The complete genome sequence of Roseobacter denitrificans reveals a mixotrophic rather than photosynthetic metabolism.</title>
        <authorList>
            <person name="Swingley W.D."/>
            <person name="Sadekar S."/>
            <person name="Mastrian S.D."/>
            <person name="Matthies H.J."/>
            <person name="Hao J."/>
            <person name="Ramos H."/>
            <person name="Acharya C.R."/>
            <person name="Conrad A.L."/>
            <person name="Taylor H.L."/>
            <person name="Dejesa L.C."/>
            <person name="Shah M.K."/>
            <person name="O'Huallachain M.E."/>
            <person name="Lince M.T."/>
            <person name="Blankenship R.E."/>
            <person name="Beatty J.T."/>
            <person name="Touchman J.W."/>
        </authorList>
    </citation>
    <scope>NUCLEOTIDE SEQUENCE [LARGE SCALE GENOMIC DNA]</scope>
    <source>
        <strain>ATCC 33942 / OCh 114</strain>
    </source>
</reference>
<organism>
    <name type="scientific">Roseobacter denitrificans (strain ATCC 33942 / OCh 114)</name>
    <name type="common">Erythrobacter sp. (strain OCh 114)</name>
    <name type="synonym">Roseobacter denitrificans</name>
    <dbReference type="NCBI Taxonomy" id="375451"/>
    <lineage>
        <taxon>Bacteria</taxon>
        <taxon>Pseudomonadati</taxon>
        <taxon>Pseudomonadota</taxon>
        <taxon>Alphaproteobacteria</taxon>
        <taxon>Rhodobacterales</taxon>
        <taxon>Roseobacteraceae</taxon>
        <taxon>Roseobacter</taxon>
    </lineage>
</organism>
<name>RL21_ROSDO</name>
<accession>Q165Y2</accession>